<name>SECY_VAULI</name>
<geneLocation type="chloroplast"/>
<comment type="function">
    <text evidence="1">The central subunit of the protein translocation channel SecYE. Consists of two halves. These two domains form a lateral gate at the front which open onto the bilayer between TMs 2 and 7, and are clamped together by SecE at the back. The channel is closed by both a pore ring composed of hydrophobic SecY resides and a short helix (helix 2A) on the extracellular side of the membrane which forms a plug (By similarity).</text>
</comment>
<comment type="subunit">
    <text evidence="2">Component of the plastid Sec protein translocase complex, which is composed of at least SecY and SecE.</text>
</comment>
<comment type="subcellular location">
    <subcellularLocation>
        <location evidence="2">Plastid</location>
        <location evidence="2">Chloroplast thylakoid membrane</location>
        <topology evidence="2">Multi-pass membrane protein</topology>
    </subcellularLocation>
</comment>
<comment type="similarity">
    <text evidence="2">Belongs to the SecY/SEC61-alpha family.</text>
</comment>
<comment type="caution">
    <text evidence="3">Bioinformatics prediction programs detect only 8 instead of 10 transmembrane regions.</text>
</comment>
<reference key="1">
    <citation type="journal article" date="2008" name="Proc. Natl. Acad. Sci. U.S.A.">
        <title>Horizontal gene transfer of the algal nuclear gene psbO to the photosynthetic sea slug Elysia chlorotica.</title>
        <authorList>
            <person name="Rumpho M.E."/>
            <person name="Worful J.M."/>
            <person name="Lee J."/>
            <person name="Kannan K."/>
            <person name="Tyler M.S."/>
            <person name="Bhattacharya D."/>
            <person name="Moustafa A."/>
            <person name="Manhart J.R."/>
        </authorList>
    </citation>
    <scope>NUCLEOTIDE SEQUENCE [LARGE SCALE GENOMIC DNA]</scope>
    <source>
        <strain>CCMP2940</strain>
    </source>
</reference>
<protein>
    <recommendedName>
        <fullName evidence="2">Protein translocase subunit SecY</fullName>
    </recommendedName>
</protein>
<feature type="chain" id="PRO_0000414218" description="Protein translocase subunit SecY">
    <location>
        <begin position="1"/>
        <end position="436"/>
    </location>
</feature>
<feature type="transmembrane region" description="Helical" evidence="2">
    <location>
        <begin position="17"/>
        <end position="37"/>
    </location>
</feature>
<feature type="transmembrane region" description="Helical" evidence="2">
    <location>
        <begin position="72"/>
        <end position="92"/>
    </location>
</feature>
<feature type="transmembrane region" description="Helical" evidence="2">
    <location>
        <begin position="122"/>
        <end position="142"/>
    </location>
</feature>
<feature type="transmembrane region" description="Helical" evidence="2">
    <location>
        <begin position="146"/>
        <end position="166"/>
    </location>
</feature>
<feature type="transmembrane region" description="Helical" evidence="2">
    <location>
        <begin position="209"/>
        <end position="229"/>
    </location>
</feature>
<feature type="transmembrane region" description="Helical" evidence="2">
    <location>
        <begin position="269"/>
        <end position="289"/>
    </location>
</feature>
<feature type="transmembrane region" description="Helical" evidence="2">
    <location>
        <begin position="309"/>
        <end position="329"/>
    </location>
</feature>
<feature type="transmembrane region" description="Helical" evidence="2">
    <location>
        <begin position="380"/>
        <end position="400"/>
    </location>
</feature>
<proteinExistence type="inferred from homology"/>
<dbReference type="EMBL" id="EU912438">
    <property type="protein sequence ID" value="ACF70933.1"/>
    <property type="molecule type" value="Genomic_DNA"/>
</dbReference>
<dbReference type="RefSeq" id="YP_002327516.1">
    <property type="nucleotide sequence ID" value="NC_011600.1"/>
</dbReference>
<dbReference type="GeneID" id="7056024"/>
<dbReference type="GO" id="GO:0009535">
    <property type="term" value="C:chloroplast thylakoid membrane"/>
    <property type="evidence" value="ECO:0007669"/>
    <property type="project" value="UniProtKB-SubCell"/>
</dbReference>
<dbReference type="GO" id="GO:0065002">
    <property type="term" value="P:intracellular protein transmembrane transport"/>
    <property type="evidence" value="ECO:0007669"/>
    <property type="project" value="UniProtKB-UniRule"/>
</dbReference>
<dbReference type="GO" id="GO:0006605">
    <property type="term" value="P:protein targeting"/>
    <property type="evidence" value="ECO:0007669"/>
    <property type="project" value="UniProtKB-UniRule"/>
</dbReference>
<dbReference type="Gene3D" id="1.10.3370.10">
    <property type="entry name" value="SecY subunit domain"/>
    <property type="match status" value="1"/>
</dbReference>
<dbReference type="HAMAP" id="MF_01465">
    <property type="entry name" value="SecY"/>
    <property type="match status" value="1"/>
</dbReference>
<dbReference type="InterPro" id="IPR026593">
    <property type="entry name" value="SecY"/>
</dbReference>
<dbReference type="InterPro" id="IPR002208">
    <property type="entry name" value="SecY/SEC61-alpha"/>
</dbReference>
<dbReference type="InterPro" id="IPR030659">
    <property type="entry name" value="SecY_CS"/>
</dbReference>
<dbReference type="InterPro" id="IPR023201">
    <property type="entry name" value="SecY_dom_sf"/>
</dbReference>
<dbReference type="NCBIfam" id="TIGR00967">
    <property type="entry name" value="3a0501s007"/>
    <property type="match status" value="1"/>
</dbReference>
<dbReference type="PANTHER" id="PTHR10906">
    <property type="entry name" value="SECY/SEC61-ALPHA FAMILY MEMBER"/>
    <property type="match status" value="1"/>
</dbReference>
<dbReference type="Pfam" id="PF00344">
    <property type="entry name" value="SecY"/>
    <property type="match status" value="1"/>
</dbReference>
<dbReference type="PIRSF" id="PIRSF004557">
    <property type="entry name" value="SecY"/>
    <property type="match status" value="1"/>
</dbReference>
<dbReference type="PRINTS" id="PR00303">
    <property type="entry name" value="SECYTRNLCASE"/>
</dbReference>
<dbReference type="SUPFAM" id="SSF103491">
    <property type="entry name" value="Preprotein translocase SecY subunit"/>
    <property type="match status" value="1"/>
</dbReference>
<dbReference type="PROSITE" id="PS00755">
    <property type="entry name" value="SECY_1"/>
    <property type="match status" value="1"/>
</dbReference>
<dbReference type="PROSITE" id="PS00756">
    <property type="entry name" value="SECY_2"/>
    <property type="match status" value="1"/>
</dbReference>
<evidence type="ECO:0000250" key="1"/>
<evidence type="ECO:0000255" key="2">
    <source>
        <dbReference type="HAMAP-Rule" id="MF_01465"/>
    </source>
</evidence>
<evidence type="ECO:0000305" key="3"/>
<gene>
    <name evidence="2" type="primary">secY</name>
</gene>
<accession>B7T1W7</accession>
<organism>
    <name type="scientific">Vaucheria litorea</name>
    <name type="common">Yellow-green alga</name>
    <dbReference type="NCBI Taxonomy" id="109269"/>
    <lineage>
        <taxon>Eukaryota</taxon>
        <taxon>Sar</taxon>
        <taxon>Stramenopiles</taxon>
        <taxon>Ochrophyta</taxon>
        <taxon>PX clade</taxon>
        <taxon>Xanthophyceae</taxon>
        <taxon>Vaucheriales</taxon>
        <taxon>Vaucheriaceae</taxon>
        <taxon>Vaucheria</taxon>
    </lineage>
</organism>
<keyword id="KW-0150">Chloroplast</keyword>
<keyword id="KW-0472">Membrane</keyword>
<keyword id="KW-0934">Plastid</keyword>
<keyword id="KW-0653">Protein transport</keyword>
<keyword id="KW-0793">Thylakoid</keyword>
<keyword id="KW-0811">Translocation</keyword>
<keyword id="KW-0812">Transmembrane</keyword>
<keyword id="KW-1133">Transmembrane helix</keyword>
<keyword id="KW-0813">Transport</keyword>
<sequence length="436" mass="49694">MNTKLQDSKSPRLKNRILLTISLLTIVRIGSFIPVPYITKEVLVNLLSAENSSNNTFAQLLNTFSGGGNSSFGLLSLGILPYINASIIIQLLTTIIPALSKMQKDEGEYGRRKLVDFTRYLTFFWAIVESISISYSLREVIFEWNLQVYFLISLSLITGSMIVLWFSELITKNGLGNGSSLLICFNIVSNLPDQIKFSLISLKNQINNFSNIFLLISIFLITTIGCIYINEAIIKIPLVSARQLLKKTKSEEKNSSNSILPLRINQAGVMPLVFTSYAILFFSSLFEIIKKQTNIFNIFFQYPILNSVISYWFLKILFWIFYATLIFFFTYFYSTIVLDPKDVAERFRKNSVVILGISPGSSTRSYLSKILRFIAKINAIFLIYNIIGLQILESILNLNIINIRGLGFTSQLILVNVLIDTIKRIRSFLNEEENYF</sequence>